<sequence>MKQYKDLCRHVLEHGEKKGDRTGTGTISTFGYQMRFHLQEGFPMLTTKKLHFKSIAHELLWFLKGDTNVRYLQENGVRIWNEWADENGELGPVYGSQWRSWRGADGETIDQISRLIEDIKTNPNSRRLIVSAWNVGEIDKMALPPCHCLFQFYVSDGKLSCQLYQRSADVFLGVPFNIASYALLTMMIAHVTGLEPGEFIHTFGDVHIYQNHIEQVNLQLTRDVRPLPKLRFAREIDSIFNFAFEDFIIEDYDPHPHIKGAVSV</sequence>
<evidence type="ECO:0000255" key="1">
    <source>
        <dbReference type="HAMAP-Rule" id="MF_00008"/>
    </source>
</evidence>
<comment type="function">
    <text evidence="1">Catalyzes the reductive methylation of 2'-deoxyuridine-5'-monophosphate (dUMP) to 2'-deoxythymidine-5'-monophosphate (dTMP) while utilizing 5,10-methylenetetrahydrofolate (mTHF) as the methyl donor and reductant in the reaction, yielding dihydrofolate (DHF) as a by-product. This enzymatic reaction provides an intracellular de novo source of dTMP, an essential precursor for DNA biosynthesis.</text>
</comment>
<comment type="catalytic activity">
    <reaction evidence="1">
        <text>dUMP + (6R)-5,10-methylene-5,6,7,8-tetrahydrofolate = 7,8-dihydrofolate + dTMP</text>
        <dbReference type="Rhea" id="RHEA:12104"/>
        <dbReference type="ChEBI" id="CHEBI:15636"/>
        <dbReference type="ChEBI" id="CHEBI:57451"/>
        <dbReference type="ChEBI" id="CHEBI:63528"/>
        <dbReference type="ChEBI" id="CHEBI:246422"/>
        <dbReference type="EC" id="2.1.1.45"/>
    </reaction>
</comment>
<comment type="pathway">
    <text evidence="1">Pyrimidine metabolism; dTTP biosynthesis.</text>
</comment>
<comment type="subunit">
    <text evidence="1">Homodimer.</text>
</comment>
<comment type="subcellular location">
    <subcellularLocation>
        <location evidence="1">Cytoplasm</location>
    </subcellularLocation>
</comment>
<comment type="similarity">
    <text evidence="1">Belongs to the thymidylate synthase family. Bacterial-type ThyA subfamily.</text>
</comment>
<name>TYSY2_BACSH</name>
<keyword id="KW-0963">Cytoplasm</keyword>
<keyword id="KW-0489">Methyltransferase</keyword>
<keyword id="KW-0545">Nucleotide biosynthesis</keyword>
<keyword id="KW-0808">Transferase</keyword>
<proteinExistence type="inferred from homology"/>
<gene>
    <name evidence="1" type="primary">thyA2</name>
    <name type="synonym">thyB</name>
    <name type="ordered locus">BSUW23_10675</name>
</gene>
<protein>
    <recommendedName>
        <fullName evidence="1">Thymidylate synthase 2</fullName>
        <shortName evidence="1">TS 2</shortName>
        <shortName evidence="1">TSase 2</shortName>
        <ecNumber evidence="1">2.1.1.45</ecNumber>
    </recommendedName>
</protein>
<organism>
    <name type="scientific">Bacillus spizizenii (strain ATCC 23059 / NRRL B-14472 / W23)</name>
    <name type="common">Bacillus subtilis subsp. spizizenii</name>
    <dbReference type="NCBI Taxonomy" id="655816"/>
    <lineage>
        <taxon>Bacteria</taxon>
        <taxon>Bacillati</taxon>
        <taxon>Bacillota</taxon>
        <taxon>Bacilli</taxon>
        <taxon>Bacillales</taxon>
        <taxon>Bacillaceae</taxon>
        <taxon>Bacillus</taxon>
    </lineage>
</organism>
<reference key="1">
    <citation type="journal article" date="2011" name="Microbiology">
        <title>The genome sequence of Bacillus subtilis subsp. spizizenii W23: insights into speciation within the B. subtilis complex and into the history of B. subtilis genetics.</title>
        <authorList>
            <person name="Zeigler D.R."/>
        </authorList>
    </citation>
    <scope>NUCLEOTIDE SEQUENCE [LARGE SCALE GENOMIC DNA]</scope>
    <source>
        <strain>ATCC 23059 / NRRL B-14472 / W23</strain>
    </source>
</reference>
<dbReference type="EC" id="2.1.1.45" evidence="1"/>
<dbReference type="EMBL" id="CP002183">
    <property type="protein sequence ID" value="ADM38175.1"/>
    <property type="molecule type" value="Genomic_DNA"/>
</dbReference>
<dbReference type="RefSeq" id="WP_003218224.1">
    <property type="nucleotide sequence ID" value="NZ_CP148102.1"/>
</dbReference>
<dbReference type="SMR" id="E0U0H8"/>
<dbReference type="KEGG" id="bss:BSUW23_10675"/>
<dbReference type="HOGENOM" id="CLU_021669_0_0_9"/>
<dbReference type="UniPathway" id="UPA00575"/>
<dbReference type="Proteomes" id="UP000002233">
    <property type="component" value="Chromosome"/>
</dbReference>
<dbReference type="GO" id="GO:0005829">
    <property type="term" value="C:cytosol"/>
    <property type="evidence" value="ECO:0007669"/>
    <property type="project" value="TreeGrafter"/>
</dbReference>
<dbReference type="GO" id="GO:0004799">
    <property type="term" value="F:thymidylate synthase activity"/>
    <property type="evidence" value="ECO:0007669"/>
    <property type="project" value="UniProtKB-UniRule"/>
</dbReference>
<dbReference type="GO" id="GO:0006231">
    <property type="term" value="P:dTMP biosynthetic process"/>
    <property type="evidence" value="ECO:0007669"/>
    <property type="project" value="UniProtKB-UniRule"/>
</dbReference>
<dbReference type="GO" id="GO:0006235">
    <property type="term" value="P:dTTP biosynthetic process"/>
    <property type="evidence" value="ECO:0007669"/>
    <property type="project" value="UniProtKB-UniRule"/>
</dbReference>
<dbReference type="GO" id="GO:0032259">
    <property type="term" value="P:methylation"/>
    <property type="evidence" value="ECO:0007669"/>
    <property type="project" value="UniProtKB-KW"/>
</dbReference>
<dbReference type="CDD" id="cd00351">
    <property type="entry name" value="TS_Pyrimidine_HMase"/>
    <property type="match status" value="1"/>
</dbReference>
<dbReference type="FunFam" id="3.30.572.10:FF:000001">
    <property type="entry name" value="Thymidylate synthase"/>
    <property type="match status" value="1"/>
</dbReference>
<dbReference type="Gene3D" id="3.30.572.10">
    <property type="entry name" value="Thymidylate synthase/dCMP hydroxymethylase domain"/>
    <property type="match status" value="1"/>
</dbReference>
<dbReference type="HAMAP" id="MF_00008">
    <property type="entry name" value="Thymidy_synth_bact"/>
    <property type="match status" value="1"/>
</dbReference>
<dbReference type="InterPro" id="IPR045097">
    <property type="entry name" value="Thymidate_synth/dCMP_Mease"/>
</dbReference>
<dbReference type="InterPro" id="IPR023451">
    <property type="entry name" value="Thymidate_synth/dCMP_Mease_dom"/>
</dbReference>
<dbReference type="InterPro" id="IPR036926">
    <property type="entry name" value="Thymidate_synth/dCMP_Mease_sf"/>
</dbReference>
<dbReference type="InterPro" id="IPR000398">
    <property type="entry name" value="Thymidylate_synthase"/>
</dbReference>
<dbReference type="InterPro" id="IPR020940">
    <property type="entry name" value="Thymidylate_synthase_AS"/>
</dbReference>
<dbReference type="NCBIfam" id="NF002497">
    <property type="entry name" value="PRK01827.1-3"/>
    <property type="match status" value="1"/>
</dbReference>
<dbReference type="NCBIfam" id="NF002499">
    <property type="entry name" value="PRK01827.1-5"/>
    <property type="match status" value="1"/>
</dbReference>
<dbReference type="NCBIfam" id="TIGR03284">
    <property type="entry name" value="thym_sym"/>
    <property type="match status" value="2"/>
</dbReference>
<dbReference type="PANTHER" id="PTHR11548:SF9">
    <property type="entry name" value="THYMIDYLATE SYNTHASE"/>
    <property type="match status" value="1"/>
</dbReference>
<dbReference type="PANTHER" id="PTHR11548">
    <property type="entry name" value="THYMIDYLATE SYNTHASE 1"/>
    <property type="match status" value="1"/>
</dbReference>
<dbReference type="Pfam" id="PF00303">
    <property type="entry name" value="Thymidylat_synt"/>
    <property type="match status" value="1"/>
</dbReference>
<dbReference type="PRINTS" id="PR00108">
    <property type="entry name" value="THYMDSNTHASE"/>
</dbReference>
<dbReference type="SUPFAM" id="SSF55831">
    <property type="entry name" value="Thymidylate synthase/dCMP hydroxymethylase"/>
    <property type="match status" value="1"/>
</dbReference>
<dbReference type="PROSITE" id="PS00091">
    <property type="entry name" value="THYMIDYLATE_SYNTHASE"/>
    <property type="match status" value="1"/>
</dbReference>
<accession>E0U0H8</accession>
<feature type="chain" id="PRO_0000403665" description="Thymidylate synthase 2">
    <location>
        <begin position="1"/>
        <end position="264"/>
    </location>
</feature>
<feature type="active site" description="Nucleophile" evidence="1">
    <location>
        <position position="146"/>
    </location>
</feature>
<feature type="binding site" description="in other chain" evidence="1">
    <location>
        <position position="21"/>
    </location>
    <ligand>
        <name>dUMP</name>
        <dbReference type="ChEBI" id="CHEBI:246422"/>
        <note>ligand shared between dimeric partners</note>
    </ligand>
</feature>
<feature type="binding site" evidence="1">
    <location>
        <position position="51"/>
    </location>
    <ligand>
        <name>(6R)-5,10-methylene-5,6,7,8-tetrahydrofolate</name>
        <dbReference type="ChEBI" id="CHEBI:15636"/>
    </ligand>
</feature>
<feature type="binding site" evidence="1">
    <location>
        <begin position="126"/>
        <end position="127"/>
    </location>
    <ligand>
        <name>dUMP</name>
        <dbReference type="ChEBI" id="CHEBI:246422"/>
        <note>ligand shared between dimeric partners</note>
    </ligand>
</feature>
<feature type="binding site" description="in other chain" evidence="1">
    <location>
        <begin position="166"/>
        <end position="169"/>
    </location>
    <ligand>
        <name>dUMP</name>
        <dbReference type="ChEBI" id="CHEBI:246422"/>
        <note>ligand shared between dimeric partners</note>
    </ligand>
</feature>
<feature type="binding site" evidence="1">
    <location>
        <position position="169"/>
    </location>
    <ligand>
        <name>(6R)-5,10-methylene-5,6,7,8-tetrahydrofolate</name>
        <dbReference type="ChEBI" id="CHEBI:15636"/>
    </ligand>
</feature>
<feature type="binding site" description="in other chain" evidence="1">
    <location>
        <position position="177"/>
    </location>
    <ligand>
        <name>dUMP</name>
        <dbReference type="ChEBI" id="CHEBI:246422"/>
        <note>ligand shared between dimeric partners</note>
    </ligand>
</feature>
<feature type="binding site" description="in other chain" evidence="1">
    <location>
        <begin position="207"/>
        <end position="209"/>
    </location>
    <ligand>
        <name>dUMP</name>
        <dbReference type="ChEBI" id="CHEBI:246422"/>
        <note>ligand shared between dimeric partners</note>
    </ligand>
</feature>
<feature type="binding site" evidence="1">
    <location>
        <position position="263"/>
    </location>
    <ligand>
        <name>(6R)-5,10-methylene-5,6,7,8-tetrahydrofolate</name>
        <dbReference type="ChEBI" id="CHEBI:15636"/>
    </ligand>
</feature>